<feature type="chain" id="PRO_0000139796" description="Nitrogen regulatory protein P-II">
    <location>
        <begin position="1"/>
        <end position="112"/>
    </location>
</feature>
<feature type="modified residue" description="Phosphoserine" evidence="3">
    <location>
        <position position="49"/>
    </location>
</feature>
<feature type="modified residue" description="O-UMP-tyrosine" evidence="2">
    <location>
        <position position="51"/>
    </location>
</feature>
<comment type="function">
    <text evidence="1">P-II indirectly controls the transcription of the GS gene (glnA). P-II prevents NR-II-catalyzed conversion of NR-I to NR-I-phosphate, the transcriptional activator of glnA. When P-II is phosphorylated, these events are reversed. In nitrogen-limiting conditions, when the ratio of Gln to 2-ketoglutarate decreases, P-II is phosphorylated which allows the deadenylation of glutamine synthetase (GS), thus activating the enzyme (By similarity).</text>
</comment>
<comment type="subunit">
    <text evidence="1">Homotrimer.</text>
</comment>
<comment type="PTM">
    <text evidence="1">Phosphorylation dependent on the nitrogen source and spectral light quality.</text>
</comment>
<comment type="similarity">
    <text evidence="2">Belongs to the P(II) protein family.</text>
</comment>
<reference key="1">
    <citation type="submission" date="1996-04" db="EMBL/GenBank/DDBJ databases">
        <authorList>
            <person name="Liotenberg S."/>
            <person name="Castets A.M."/>
            <person name="Campbell D."/>
            <person name="Houmard J."/>
            <person name="Tandeau de Marsac N."/>
        </authorList>
    </citation>
    <scope>NUCLEOTIDE SEQUENCE [GENOMIC DNA]</scope>
</reference>
<accession>Q47894</accession>
<proteinExistence type="inferred from homology"/>
<name>GLNB_MICDP</name>
<evidence type="ECO:0000250" key="1"/>
<evidence type="ECO:0000255" key="2">
    <source>
        <dbReference type="PROSITE-ProRule" id="PRU00675"/>
    </source>
</evidence>
<evidence type="ECO:0000305" key="3"/>
<dbReference type="EMBL" id="X97327">
    <property type="protein sequence ID" value="CAA65992.1"/>
    <property type="molecule type" value="Genomic_DNA"/>
</dbReference>
<dbReference type="SMR" id="Q47894"/>
<dbReference type="GO" id="GO:0005829">
    <property type="term" value="C:cytosol"/>
    <property type="evidence" value="ECO:0007669"/>
    <property type="project" value="TreeGrafter"/>
</dbReference>
<dbReference type="GO" id="GO:0005524">
    <property type="term" value="F:ATP binding"/>
    <property type="evidence" value="ECO:0007669"/>
    <property type="project" value="TreeGrafter"/>
</dbReference>
<dbReference type="GO" id="GO:0030234">
    <property type="term" value="F:enzyme regulator activity"/>
    <property type="evidence" value="ECO:0007669"/>
    <property type="project" value="InterPro"/>
</dbReference>
<dbReference type="GO" id="GO:0006808">
    <property type="term" value="P:regulation of nitrogen utilization"/>
    <property type="evidence" value="ECO:0007669"/>
    <property type="project" value="InterPro"/>
</dbReference>
<dbReference type="FunFam" id="3.30.70.120:FF:000001">
    <property type="entry name" value="Nitrogen regulatory protein P-II"/>
    <property type="match status" value="1"/>
</dbReference>
<dbReference type="Gene3D" id="3.30.70.120">
    <property type="match status" value="1"/>
</dbReference>
<dbReference type="InterPro" id="IPR002187">
    <property type="entry name" value="N-reg_PII"/>
</dbReference>
<dbReference type="InterPro" id="IPR011322">
    <property type="entry name" value="N-reg_PII-like_a/b"/>
</dbReference>
<dbReference type="InterPro" id="IPR015867">
    <property type="entry name" value="N-reg_PII/ATP_PRibTrfase_C"/>
</dbReference>
<dbReference type="InterPro" id="IPR017918">
    <property type="entry name" value="N-reg_PII_CS"/>
</dbReference>
<dbReference type="InterPro" id="IPR002332">
    <property type="entry name" value="N-reg_PII_urydylation_site"/>
</dbReference>
<dbReference type="PANTHER" id="PTHR30115">
    <property type="entry name" value="NITROGEN REGULATORY PROTEIN P-II"/>
    <property type="match status" value="1"/>
</dbReference>
<dbReference type="PANTHER" id="PTHR30115:SF11">
    <property type="entry name" value="NITROGEN REGULATORY PROTEIN P-II HOMOLOG"/>
    <property type="match status" value="1"/>
</dbReference>
<dbReference type="Pfam" id="PF00543">
    <property type="entry name" value="P-II"/>
    <property type="match status" value="1"/>
</dbReference>
<dbReference type="PIRSF" id="PIRSF039144">
    <property type="entry name" value="GlnB"/>
    <property type="match status" value="1"/>
</dbReference>
<dbReference type="PRINTS" id="PR00340">
    <property type="entry name" value="PIIGLNB"/>
</dbReference>
<dbReference type="SMART" id="SM00938">
    <property type="entry name" value="P-II"/>
    <property type="match status" value="1"/>
</dbReference>
<dbReference type="SUPFAM" id="SSF54913">
    <property type="entry name" value="GlnB-like"/>
    <property type="match status" value="1"/>
</dbReference>
<dbReference type="PROSITE" id="PS00638">
    <property type="entry name" value="PII_GLNB_CTER"/>
    <property type="match status" value="1"/>
</dbReference>
<dbReference type="PROSITE" id="PS51343">
    <property type="entry name" value="PII_GLNB_DOM"/>
    <property type="match status" value="1"/>
</dbReference>
<dbReference type="PROSITE" id="PS00496">
    <property type="entry name" value="PII_GLNB_UMP"/>
    <property type="match status" value="1"/>
</dbReference>
<keyword id="KW-0547">Nucleotide-binding</keyword>
<keyword id="KW-0597">Phosphoprotein</keyword>
<keyword id="KW-0804">Transcription</keyword>
<keyword id="KW-0805">Transcription regulation</keyword>
<protein>
    <recommendedName>
        <fullName>Nitrogen regulatory protein P-II</fullName>
    </recommendedName>
    <alternativeName>
        <fullName>PII signal transducing protein</fullName>
    </alternativeName>
</protein>
<organism>
    <name type="scientific">Microchaete diplosiphon</name>
    <name type="common">Fremyella diplosiphon</name>
    <dbReference type="NCBI Taxonomy" id="1197"/>
    <lineage>
        <taxon>Bacteria</taxon>
        <taxon>Bacillati</taxon>
        <taxon>Cyanobacteriota</taxon>
        <taxon>Cyanophyceae</taxon>
        <taxon>Nostocales</taxon>
        <taxon>Rivulariaceae</taxon>
        <taxon>Microchaete</taxon>
    </lineage>
</organism>
<sequence>MKKVEAIIRPFKLDEVKIALVNAGIVGMTVSEVRGFGRQKGQTERYRGSEYTVEFLQKLKVEIVVEDNQVDMVVDKIIAAARTGEIGDGKIFISPVEQVVRIRTGEKNTEAV</sequence>
<gene>
    <name type="primary">glnB</name>
</gene>